<organism>
    <name type="scientific">Human papillomavirus 17</name>
    <dbReference type="NCBI Taxonomy" id="10607"/>
    <lineage>
        <taxon>Viruses</taxon>
        <taxon>Monodnaviria</taxon>
        <taxon>Shotokuvirae</taxon>
        <taxon>Cossaviricota</taxon>
        <taxon>Papovaviricetes</taxon>
        <taxon>Zurhausenvirales</taxon>
        <taxon>Papillomaviridae</taxon>
        <taxon>Firstpapillomavirinae</taxon>
        <taxon>Betapapillomavirus</taxon>
        <taxon>Betapapillomavirus 2</taxon>
    </lineage>
</organism>
<feature type="chain" id="PRO_0000133415" description="Protein E7">
    <location>
        <begin position="1"/>
        <end position="95"/>
    </location>
</feature>
<feature type="zinc finger region" evidence="1">
    <location>
        <begin position="52"/>
        <end position="88"/>
    </location>
</feature>
<feature type="region of interest" description="E7 terminal domain" evidence="1">
    <location>
        <begin position="1"/>
        <end position="40"/>
    </location>
</feature>
<feature type="short sequence motif" description="LXCXE motif; interaction with host RB1 and TMEM173/STING" evidence="1">
    <location>
        <begin position="24"/>
        <end position="28"/>
    </location>
</feature>
<feature type="short sequence motif" description="Nuclear export signal" evidence="1">
    <location>
        <begin position="70"/>
        <end position="78"/>
    </location>
</feature>
<gene>
    <name evidence="1" type="primary">E7</name>
</gene>
<sequence>MIGKEATIPDIVLELQQLVQPTDLHCYEELSEEETETEEEPRRIPYKIVAPCCFCGSKLRLIVLATHAGIRSQEELLLGEVQLVCPNCREKLRHD</sequence>
<name>VE7_HPV17</name>
<dbReference type="EMBL" id="X74469">
    <property type="protein sequence ID" value="CAA52513.1"/>
    <property type="molecule type" value="Genomic_DNA"/>
</dbReference>
<dbReference type="PIR" id="S36480">
    <property type="entry name" value="S36480"/>
</dbReference>
<dbReference type="SMR" id="P36821"/>
<dbReference type="Proteomes" id="UP000006932">
    <property type="component" value="Genome"/>
</dbReference>
<dbReference type="GO" id="GO:0030430">
    <property type="term" value="C:host cell cytoplasm"/>
    <property type="evidence" value="ECO:0007669"/>
    <property type="project" value="UniProtKB-SubCell"/>
</dbReference>
<dbReference type="GO" id="GO:0042025">
    <property type="term" value="C:host cell nucleus"/>
    <property type="evidence" value="ECO:0007669"/>
    <property type="project" value="UniProtKB-SubCell"/>
</dbReference>
<dbReference type="GO" id="GO:0003677">
    <property type="term" value="F:DNA binding"/>
    <property type="evidence" value="ECO:0007669"/>
    <property type="project" value="UniProtKB-UniRule"/>
</dbReference>
<dbReference type="GO" id="GO:0003700">
    <property type="term" value="F:DNA-binding transcription factor activity"/>
    <property type="evidence" value="ECO:0007669"/>
    <property type="project" value="UniProtKB-UniRule"/>
</dbReference>
<dbReference type="GO" id="GO:0019904">
    <property type="term" value="F:protein domain specific binding"/>
    <property type="evidence" value="ECO:0007669"/>
    <property type="project" value="UniProtKB-UniRule"/>
</dbReference>
<dbReference type="GO" id="GO:0008270">
    <property type="term" value="F:zinc ion binding"/>
    <property type="evidence" value="ECO:0007669"/>
    <property type="project" value="UniProtKB-KW"/>
</dbReference>
<dbReference type="GO" id="GO:0006351">
    <property type="term" value="P:DNA-templated transcription"/>
    <property type="evidence" value="ECO:0007669"/>
    <property type="project" value="UniProtKB-UniRule"/>
</dbReference>
<dbReference type="GO" id="GO:0039645">
    <property type="term" value="P:symbiont-mediated perturbation of host cell cycle G1/S transition checkpoint"/>
    <property type="evidence" value="ECO:0007669"/>
    <property type="project" value="UniProtKB-UniRule"/>
</dbReference>
<dbReference type="GO" id="GO:0052170">
    <property type="term" value="P:symbiont-mediated suppression of host innate immune response"/>
    <property type="evidence" value="ECO:0007669"/>
    <property type="project" value="UniProtKB-KW"/>
</dbReference>
<dbReference type="GO" id="GO:0039502">
    <property type="term" value="P:symbiont-mediated suppression of host type I interferon-mediated signaling pathway"/>
    <property type="evidence" value="ECO:0007669"/>
    <property type="project" value="UniProtKB-UniRule"/>
</dbReference>
<dbReference type="Gene3D" id="3.30.160.330">
    <property type="match status" value="1"/>
</dbReference>
<dbReference type="HAMAP" id="MF_04004">
    <property type="entry name" value="PPV_E7"/>
    <property type="match status" value="1"/>
</dbReference>
<dbReference type="InterPro" id="IPR000148">
    <property type="entry name" value="Papilloma_E7"/>
</dbReference>
<dbReference type="Pfam" id="PF00527">
    <property type="entry name" value="E7"/>
    <property type="match status" value="1"/>
</dbReference>
<dbReference type="PIRSF" id="PIRSF003407">
    <property type="entry name" value="Papvi_E7"/>
    <property type="match status" value="1"/>
</dbReference>
<dbReference type="SUPFAM" id="SSF161234">
    <property type="entry name" value="E7 C-terminal domain-like"/>
    <property type="match status" value="1"/>
</dbReference>
<proteinExistence type="inferred from homology"/>
<accession>P36821</accession>
<organismHost>
    <name type="scientific">Homo sapiens</name>
    <name type="common">Human</name>
    <dbReference type="NCBI Taxonomy" id="9606"/>
</organismHost>
<protein>
    <recommendedName>
        <fullName evidence="1">Protein E7</fullName>
    </recommendedName>
</protein>
<evidence type="ECO:0000255" key="1">
    <source>
        <dbReference type="HAMAP-Rule" id="MF_04004"/>
    </source>
</evidence>
<keyword id="KW-0010">Activator</keyword>
<keyword id="KW-0238">DNA-binding</keyword>
<keyword id="KW-0244">Early protein</keyword>
<keyword id="KW-1078">G1/S host cell cycle checkpoint dysregulation by virus</keyword>
<keyword id="KW-1035">Host cytoplasm</keyword>
<keyword id="KW-1048">Host nucleus</keyword>
<keyword id="KW-0945">Host-virus interaction</keyword>
<keyword id="KW-1090">Inhibition of host innate immune response by virus</keyword>
<keyword id="KW-1114">Inhibition of host interferon signaling pathway by virus</keyword>
<keyword id="KW-0922">Interferon antiviral system evasion</keyword>
<keyword id="KW-0479">Metal-binding</keyword>
<keyword id="KW-1121">Modulation of host cell cycle by virus</keyword>
<keyword id="KW-0553">Oncogene</keyword>
<keyword id="KW-0804">Transcription</keyword>
<keyword id="KW-0805">Transcription regulation</keyword>
<keyword id="KW-0899">Viral immunoevasion</keyword>
<keyword id="KW-0862">Zinc</keyword>
<keyword id="KW-0863">Zinc-finger</keyword>
<comment type="function">
    <text evidence="1">Plays a role in viral genome replication by driving entry of quiescent cells into the cell cycle. Stimulation of progression from G1 to S phase allows the virus to efficiently use the cellular DNA replicating machinery to achieve viral genome replication. E7 protein has both transforming and trans-activating activities. Induces the disassembly of the E2F1 transcription factor from RB1, with subsequent transcriptional activation of E2F1-regulated S-phase genes. Interferes with host histone deacetylation mediated by HDAC1 and HDAC2, leading to transcription activation. Also plays a role in the inhibition of both antiviral and antiproliferative functions of host interferon alpha. Interaction with host TMEM173/STING impairs the ability of TMEM173/STING to sense cytosolic DNA and promote the production of type I interferon (IFN-alpha and IFN-beta).</text>
</comment>
<comment type="subunit">
    <text evidence="1">Homodimer. Homooligomer. Interacts with host RB1; this interaction induces dissociation of RB1-E2F1 complex thereby disrupting RB1 activity. Interacts with host EP300; this interaction represses EP300 transcriptional activity. Interacts with protein E2; this interaction inhibits E7 oncogenic activity. Interacts with host TMEM173/STING; this interaction impairs the ability of TMEM173/STING to sense cytosolic DNA and promote the production of type I interferon (IFN-alpha and IFN-beta).</text>
</comment>
<comment type="subcellular location">
    <subcellularLocation>
        <location evidence="1">Host cytoplasm</location>
    </subcellularLocation>
    <subcellularLocation>
        <location evidence="1">Host nucleus</location>
    </subcellularLocation>
    <text evidence="1">Predominantly found in the host nucleus.</text>
</comment>
<comment type="domain">
    <text evidence="1">The E7 terminal domain is an intrinsically disordered domain, whose flexibility and conformational transitions confer target adaptability to the oncoprotein. It allows adaptation to a variety of protein targets and exposes the PEST degradation sequence that regulates its turnover in the cell.</text>
</comment>
<comment type="PTM">
    <text evidence="1">Highly phosphorylated.</text>
</comment>
<comment type="similarity">
    <text evidence="1">Belongs to the papillomaviridae E7 protein family.</text>
</comment>
<reference key="1">
    <citation type="journal article" date="1994" name="Curr. Top. Microbiol. Immunol.">
        <title>Primer-directed sequencing of human papillomavirus types.</title>
        <authorList>
            <person name="Delius H."/>
            <person name="Hofmann B."/>
        </authorList>
    </citation>
    <scope>NUCLEOTIDE SEQUENCE [GENOMIC DNA]</scope>
</reference>
<reference key="2">
    <citation type="journal article" date="2002" name="Rev. Med. Virol.">
        <title>Interactions of SV40 large T antigen and other viral proteins with retinoblastoma tumour suppressor.</title>
        <authorList>
            <person name="Lee C."/>
            <person name="Cho Y."/>
        </authorList>
    </citation>
    <scope>REVIEW</scope>
</reference>